<sequence length="960" mass="108726">MVSVKPLPDIDSNEGETDADVYEVEDILADRVNKNGINEYYIKWAGYDWYDNTWEPEQNLFGAEKVLKKWKKRKKLIAKGLLEPFDAEDNEAKKMKREKEILRQQRQKRKSELTQLSQKVKEKFKKMRKKPARRIVTIANDEEEEDDQTMDEDAFERKSMQGELKERNLTDKTSTLSTSFGETSPDVNPFYLSEWPTVTDSILLSKSLSSDAIPLKNGEIKSTMLMPSDSDNSVPGIQNSNNLENTGAFVENANSPQSNTPLSTFRHSSPLSLSPVITSDNDVANSLFFSNSTPLPSSLKIKKEAPKLETHTILVSDNSGSLTKQDILSYFAFIKGNIEVFFLKSPKKDKVCNMAYIQFDSIEQAKLAYDKGHPSWHVTLVKGKISTDMEECKVSKSILKTTPSKKANARSVSFTQTTTDTLSESEKFASNVDLDENFDFNVNVTNEDAKQLKKSVIGSSWTTVNNDWNSVSKSDQTFENDGASKVVPAGNITLNSDNSLHHSISESEDLSSASTLSDYFRFVLRVGKSLYYAGELSFDISKLKAETEHQQLLRSLVSCKQVDVLRFVTSQYLEVFGTCLTKVLSGSLCIRSDVDMTHFKNILNRGNGAGIVLGSNYTLLLFTEDNNALMNLYDCQGQSNSPFWMVIFEPLESILVEWSAKNLRPKKPYHKSQSYLSYLLQLGHIDLHKIGAFQATQILIVSKQPSPEAEELEDTFREAAIPTFRGLEIPESLFLSQNVFVFLNVSLEDDFDQLQFLTLAKRKSCKFFLFGLSLPLKSPNDSHVGTDFKKNNEPLDKLTYSQYLRPMFPKGGVVSVTLSALIKTPRLLELISPFLEIKKDSWILILPPSIVDMVKSYFVTNNPDKSLLEIQNLLNTLQRYLTNPALKNVTLYQDWDIVIDDSADVSLASTLQLYQKKNYDKYRRFVLIHELKNELTPVNGLDIVDYDEFKETFMRAIGLK</sequence>
<gene>
    <name evidence="7" type="primary">chp1</name>
    <name evidence="8" type="ORF">SPAC18G6.02c</name>
</gene>
<organism>
    <name type="scientific">Schizosaccharomyces pombe (strain 972 / ATCC 24843)</name>
    <name type="common">Fission yeast</name>
    <dbReference type="NCBI Taxonomy" id="284812"/>
    <lineage>
        <taxon>Eukaryota</taxon>
        <taxon>Fungi</taxon>
        <taxon>Dikarya</taxon>
        <taxon>Ascomycota</taxon>
        <taxon>Taphrinomycotina</taxon>
        <taxon>Schizosaccharomycetes</taxon>
        <taxon>Schizosaccharomycetales</taxon>
        <taxon>Schizosaccharomycetaceae</taxon>
        <taxon>Schizosaccharomyces</taxon>
    </lineage>
</organism>
<proteinExistence type="evidence at protein level"/>
<dbReference type="EMBL" id="CU329670">
    <property type="protein sequence ID" value="CAA92382.1"/>
    <property type="molecule type" value="Genomic_DNA"/>
</dbReference>
<dbReference type="PIR" id="T37916">
    <property type="entry name" value="T37916"/>
</dbReference>
<dbReference type="RefSeq" id="NP_593666.1">
    <property type="nucleotide sequence ID" value="NM_001019098.2"/>
</dbReference>
<dbReference type="PDB" id="2RSN">
    <property type="method" value="NMR"/>
    <property type="chains" value="A=1-75"/>
</dbReference>
<dbReference type="PDB" id="3G7L">
    <property type="method" value="X-ray"/>
    <property type="resolution" value="2.20 A"/>
    <property type="chains" value="A=15-75"/>
</dbReference>
<dbReference type="PDB" id="3TIX">
    <property type="method" value="X-ray"/>
    <property type="resolution" value="2.90 A"/>
    <property type="chains" value="B/D=504-960"/>
</dbReference>
<dbReference type="PDBsum" id="2RSN"/>
<dbReference type="PDBsum" id="3G7L"/>
<dbReference type="PDBsum" id="3TIX"/>
<dbReference type="BMRB" id="Q10103"/>
<dbReference type="SMR" id="Q10103"/>
<dbReference type="BioGRID" id="278711">
    <property type="interactions" value="123"/>
</dbReference>
<dbReference type="ComplexPortal" id="CPX-25777">
    <property type="entry name" value="RITS transcriptional silencing complex"/>
</dbReference>
<dbReference type="DIP" id="DIP-29301N"/>
<dbReference type="FunCoup" id="Q10103">
    <property type="interactions" value="9"/>
</dbReference>
<dbReference type="IntAct" id="Q10103">
    <property type="interactions" value="5"/>
</dbReference>
<dbReference type="STRING" id="284812.Q10103"/>
<dbReference type="iPTMnet" id="Q10103"/>
<dbReference type="PaxDb" id="4896-SPAC18G6.02c.1"/>
<dbReference type="EnsemblFungi" id="SPAC18G6.02c.1">
    <property type="protein sequence ID" value="SPAC18G6.02c.1:pep"/>
    <property type="gene ID" value="SPAC18G6.02c"/>
</dbReference>
<dbReference type="GeneID" id="2542239"/>
<dbReference type="KEGG" id="spo:2542239"/>
<dbReference type="PomBase" id="SPAC18G6.02c">
    <property type="gene designation" value="chp1"/>
</dbReference>
<dbReference type="VEuPathDB" id="FungiDB:SPAC18G6.02c"/>
<dbReference type="eggNOG" id="KOG1911">
    <property type="taxonomic scope" value="Eukaryota"/>
</dbReference>
<dbReference type="HOGENOM" id="CLU_307797_0_0_1"/>
<dbReference type="InParanoid" id="Q10103"/>
<dbReference type="OMA" id="WYDNTWE"/>
<dbReference type="Reactome" id="R-SPO-983231">
    <property type="pathway name" value="Factors involved in megakaryocyte development and platelet production"/>
</dbReference>
<dbReference type="EvolutionaryTrace" id="Q10103"/>
<dbReference type="PRO" id="PR:Q10103"/>
<dbReference type="Proteomes" id="UP000002485">
    <property type="component" value="Chromosome I"/>
</dbReference>
<dbReference type="GO" id="GO:0000779">
    <property type="term" value="C:condensed chromosome, centromeric region"/>
    <property type="evidence" value="ECO:0000314"/>
    <property type="project" value="PomBase"/>
</dbReference>
<dbReference type="GO" id="GO:0005737">
    <property type="term" value="C:cytoplasm"/>
    <property type="evidence" value="ECO:0007669"/>
    <property type="project" value="UniProtKB-KW"/>
</dbReference>
<dbReference type="GO" id="GO:1990342">
    <property type="term" value="C:heterochromatin island"/>
    <property type="evidence" value="ECO:0000314"/>
    <property type="project" value="PomBase"/>
</dbReference>
<dbReference type="GO" id="GO:0031934">
    <property type="term" value="C:mating-type region heterochromatin"/>
    <property type="evidence" value="ECO:0000314"/>
    <property type="project" value="PomBase"/>
</dbReference>
<dbReference type="GO" id="GO:0005634">
    <property type="term" value="C:nucleus"/>
    <property type="evidence" value="ECO:0000314"/>
    <property type="project" value="PomBase"/>
</dbReference>
<dbReference type="GO" id="GO:0005721">
    <property type="term" value="C:pericentric heterochromatin"/>
    <property type="evidence" value="ECO:0000314"/>
    <property type="project" value="PomBase"/>
</dbReference>
<dbReference type="GO" id="GO:0030958">
    <property type="term" value="C:RITS complex"/>
    <property type="evidence" value="ECO:0000314"/>
    <property type="project" value="PomBase"/>
</dbReference>
<dbReference type="GO" id="GO:0005816">
    <property type="term" value="C:spindle pole body"/>
    <property type="evidence" value="ECO:0007669"/>
    <property type="project" value="UniProtKB-SubCell"/>
</dbReference>
<dbReference type="GO" id="GO:0140720">
    <property type="term" value="C:subtelomeric heterochromatin"/>
    <property type="evidence" value="ECO:0000314"/>
    <property type="project" value="PomBase"/>
</dbReference>
<dbReference type="GO" id="GO:0003682">
    <property type="term" value="F:chromatin binding"/>
    <property type="evidence" value="ECO:0000318"/>
    <property type="project" value="GO_Central"/>
</dbReference>
<dbReference type="GO" id="GO:0003677">
    <property type="term" value="F:DNA binding"/>
    <property type="evidence" value="ECO:0000314"/>
    <property type="project" value="PomBase"/>
</dbReference>
<dbReference type="GO" id="GO:0140566">
    <property type="term" value="F:histone reader activity"/>
    <property type="evidence" value="ECO:0000314"/>
    <property type="project" value="PomBase"/>
</dbReference>
<dbReference type="GO" id="GO:0035064">
    <property type="term" value="F:methylated histone binding"/>
    <property type="evidence" value="ECO:0000318"/>
    <property type="project" value="GO_Central"/>
</dbReference>
<dbReference type="GO" id="GO:0003727">
    <property type="term" value="F:single-stranded RNA binding"/>
    <property type="evidence" value="ECO:0000314"/>
    <property type="project" value="PomBase"/>
</dbReference>
<dbReference type="GO" id="GO:0007059">
    <property type="term" value="P:chromosome segregation"/>
    <property type="evidence" value="ECO:0007669"/>
    <property type="project" value="UniProtKB-KW"/>
</dbReference>
<dbReference type="GO" id="GO:0031507">
    <property type="term" value="P:heterochromatin formation"/>
    <property type="evidence" value="ECO:0000269"/>
    <property type="project" value="PomBase"/>
</dbReference>
<dbReference type="GO" id="GO:0031508">
    <property type="term" value="P:pericentric heterochromatin formation"/>
    <property type="evidence" value="ECO:0000315"/>
    <property type="project" value="PomBase"/>
</dbReference>
<dbReference type="GO" id="GO:0030466">
    <property type="term" value="P:silent mating-type cassette heterochromatin formation"/>
    <property type="evidence" value="ECO:0000314"/>
    <property type="project" value="PomBase"/>
</dbReference>
<dbReference type="GO" id="GO:0140727">
    <property type="term" value="P:siRNA-mediated pericentric heterochromatin formation"/>
    <property type="evidence" value="ECO:0000315"/>
    <property type="project" value="PomBase"/>
</dbReference>
<dbReference type="GO" id="GO:0031509">
    <property type="term" value="P:subtelomeric heterochromatin formation"/>
    <property type="evidence" value="ECO:0000315"/>
    <property type="project" value="PomBase"/>
</dbReference>
<dbReference type="CDD" id="cd18636">
    <property type="entry name" value="CD_Chp1_like"/>
    <property type="match status" value="1"/>
</dbReference>
<dbReference type="CDD" id="cd00590">
    <property type="entry name" value="RRM_SF"/>
    <property type="match status" value="1"/>
</dbReference>
<dbReference type="CDD" id="cd21545">
    <property type="entry name" value="SPOC_Chp1p"/>
    <property type="match status" value="1"/>
</dbReference>
<dbReference type="FunFam" id="2.40.50.40:FF:000085">
    <property type="entry name" value="Chromo domain-containing protein 1"/>
    <property type="match status" value="1"/>
</dbReference>
<dbReference type="Gene3D" id="2.40.290.20">
    <property type="match status" value="1"/>
</dbReference>
<dbReference type="Gene3D" id="2.40.50.40">
    <property type="match status" value="1"/>
</dbReference>
<dbReference type="Gene3D" id="3.40.1010.30">
    <property type="match status" value="1"/>
</dbReference>
<dbReference type="Gene3D" id="3.40.50.11490">
    <property type="match status" value="1"/>
</dbReference>
<dbReference type="IDEAL" id="IID50149"/>
<dbReference type="InterPro" id="IPR049937">
    <property type="entry name" value="CD_Chp1-like"/>
</dbReference>
<dbReference type="InterPro" id="IPR056341">
    <property type="entry name" value="Chp1_domII"/>
</dbReference>
<dbReference type="InterPro" id="IPR048709">
    <property type="entry name" value="Chp1_PIN"/>
</dbReference>
<dbReference type="InterPro" id="IPR016197">
    <property type="entry name" value="Chromo-like_dom_sf"/>
</dbReference>
<dbReference type="InterPro" id="IPR000953">
    <property type="entry name" value="Chromo/chromo_shadow_dom"/>
</dbReference>
<dbReference type="InterPro" id="IPR023780">
    <property type="entry name" value="Chromo_domain"/>
</dbReference>
<dbReference type="InterPro" id="IPR023779">
    <property type="entry name" value="Chromodomain_CS"/>
</dbReference>
<dbReference type="InterPro" id="IPR051219">
    <property type="entry name" value="Heterochromatin_chromo-domain"/>
</dbReference>
<dbReference type="InterPro" id="IPR035979">
    <property type="entry name" value="RBD_domain_sf"/>
</dbReference>
<dbReference type="InterPro" id="IPR049938">
    <property type="entry name" value="SPOC_Chp1p"/>
</dbReference>
<dbReference type="PANTHER" id="PTHR22812">
    <property type="entry name" value="CHROMOBOX PROTEIN"/>
    <property type="match status" value="1"/>
</dbReference>
<dbReference type="Pfam" id="PF21484">
    <property type="entry name" value="Chp1-like_PIN"/>
    <property type="match status" value="1"/>
</dbReference>
<dbReference type="Pfam" id="PF22380">
    <property type="entry name" value="Chp1-like_SPOC"/>
    <property type="match status" value="1"/>
</dbReference>
<dbReference type="Pfam" id="PF23340">
    <property type="entry name" value="Chp1_domII"/>
    <property type="match status" value="1"/>
</dbReference>
<dbReference type="Pfam" id="PF00385">
    <property type="entry name" value="Chromo"/>
    <property type="match status" value="1"/>
</dbReference>
<dbReference type="SMART" id="SM00298">
    <property type="entry name" value="CHROMO"/>
    <property type="match status" value="1"/>
</dbReference>
<dbReference type="SUPFAM" id="SSF54160">
    <property type="entry name" value="Chromo domain-like"/>
    <property type="match status" value="1"/>
</dbReference>
<dbReference type="SUPFAM" id="SSF54928">
    <property type="entry name" value="RNA-binding domain, RBD"/>
    <property type="match status" value="1"/>
</dbReference>
<dbReference type="PROSITE" id="PS00598">
    <property type="entry name" value="CHROMO_1"/>
    <property type="match status" value="1"/>
</dbReference>
<dbReference type="PROSITE" id="PS50013">
    <property type="entry name" value="CHROMO_2"/>
    <property type="match status" value="1"/>
</dbReference>
<evidence type="ECO:0000255" key="1">
    <source>
        <dbReference type="PROSITE-ProRule" id="PRU00053"/>
    </source>
</evidence>
<evidence type="ECO:0000269" key="2">
    <source>
    </source>
</evidence>
<evidence type="ECO:0000269" key="3">
    <source>
    </source>
</evidence>
<evidence type="ECO:0000269" key="4">
    <source>
    </source>
</evidence>
<evidence type="ECO:0000269" key="5">
    <source>
    </source>
</evidence>
<evidence type="ECO:0000269" key="6">
    <source>
    </source>
</evidence>
<evidence type="ECO:0000303" key="7">
    <source>
    </source>
</evidence>
<evidence type="ECO:0000312" key="8">
    <source>
        <dbReference type="PomBase" id="SPAC18G6.02c"/>
    </source>
</evidence>
<evidence type="ECO:0007829" key="9">
    <source>
        <dbReference type="PDB" id="2RSN"/>
    </source>
</evidence>
<evidence type="ECO:0007829" key="10">
    <source>
        <dbReference type="PDB" id="3G7L"/>
    </source>
</evidence>
<evidence type="ECO:0007829" key="11">
    <source>
        <dbReference type="PDB" id="3TIX"/>
    </source>
</evidence>
<keyword id="KW-0002">3D-structure</keyword>
<keyword id="KW-0131">Cell cycle</keyword>
<keyword id="KW-0159">Chromosome partition</keyword>
<keyword id="KW-0963">Cytoplasm</keyword>
<keyword id="KW-0206">Cytoskeleton</keyword>
<keyword id="KW-0238">DNA-binding</keyword>
<keyword id="KW-0539">Nucleus</keyword>
<keyword id="KW-1185">Reference proteome</keyword>
<keyword id="KW-0943">RNA-mediated gene silencing</keyword>
<comment type="function">
    <text evidence="2 3 4 6">Component of the kinetochore which plays a role in stabilizing microtubules and so allowing accurate chromosome segregation. Has a role in the RNA interference (RNAi) pathway which is important for heterochromatin formation and accurate chromosome segregation. A member of the RNA-induced transcriptional silencing (RITS) complex which is involved in the biosynthesis of dsRNA from primer siRNAs provided by the RNA-directed RNA polymerase (RDRC) complex.</text>
</comment>
<comment type="subunit">
    <text evidence="3 5">Ago1, chp1 and tas3 interact to form the core of the RNA-induced transcriptional silencing (RITS) complex. The RITS complex interacts with the RDRC complex via interaction between ago1 and hrr1. Clr4 has a role in mediating this interaction (PubMed:14704433). Interacts with dri1 (PubMed:33693625).</text>
</comment>
<comment type="interaction">
    <interactant intactId="EBI-421832">
        <id>Q10103</id>
    </interactant>
    <interactant intactId="EBI-1111936">
        <id>Q10426</id>
        <label>rik1</label>
    </interactant>
    <organismsDiffer>false</organismsDiffer>
    <experiments>2</experiments>
</comment>
<comment type="interaction">
    <interactant intactId="EBI-421832">
        <id>Q10103</id>
    </interactant>
    <interactant intactId="EBI-423002">
        <id>O94687</id>
        <label>tas3</label>
    </interactant>
    <organismsDiffer>false</organismsDiffer>
    <experiments>10</experiments>
</comment>
<comment type="subcellular location">
    <subcellularLocation>
        <location evidence="4 6">Nucleus</location>
    </subcellularLocation>
    <subcellularLocation>
        <location evidence="6">Cytoplasm</location>
        <location evidence="6">Cytoskeleton</location>
        <location evidence="6">Microtubule organizing center</location>
        <location evidence="6">Spindle pole body</location>
    </subcellularLocation>
    <text>Associates with telomeric and mating-type region heterochromatin (PubMed:15607976).</text>
</comment>
<reference key="1">
    <citation type="journal article" date="2002" name="Nature">
        <title>The genome sequence of Schizosaccharomyces pombe.</title>
        <authorList>
            <person name="Wood V."/>
            <person name="Gwilliam R."/>
            <person name="Rajandream M.A."/>
            <person name="Lyne M.H."/>
            <person name="Lyne R."/>
            <person name="Stewart A."/>
            <person name="Sgouros J.G."/>
            <person name="Peat N."/>
            <person name="Hayles J."/>
            <person name="Baker S.G."/>
            <person name="Basham D."/>
            <person name="Bowman S."/>
            <person name="Brooks K."/>
            <person name="Brown D."/>
            <person name="Brown S."/>
            <person name="Chillingworth T."/>
            <person name="Churcher C.M."/>
            <person name="Collins M."/>
            <person name="Connor R."/>
            <person name="Cronin A."/>
            <person name="Davis P."/>
            <person name="Feltwell T."/>
            <person name="Fraser A."/>
            <person name="Gentles S."/>
            <person name="Goble A."/>
            <person name="Hamlin N."/>
            <person name="Harris D.E."/>
            <person name="Hidalgo J."/>
            <person name="Hodgson G."/>
            <person name="Holroyd S."/>
            <person name="Hornsby T."/>
            <person name="Howarth S."/>
            <person name="Huckle E.J."/>
            <person name="Hunt S."/>
            <person name="Jagels K."/>
            <person name="James K.D."/>
            <person name="Jones L."/>
            <person name="Jones M."/>
            <person name="Leather S."/>
            <person name="McDonald S."/>
            <person name="McLean J."/>
            <person name="Mooney P."/>
            <person name="Moule S."/>
            <person name="Mungall K.L."/>
            <person name="Murphy L.D."/>
            <person name="Niblett D."/>
            <person name="Odell C."/>
            <person name="Oliver K."/>
            <person name="O'Neil S."/>
            <person name="Pearson D."/>
            <person name="Quail M.A."/>
            <person name="Rabbinowitsch E."/>
            <person name="Rutherford K.M."/>
            <person name="Rutter S."/>
            <person name="Saunders D."/>
            <person name="Seeger K."/>
            <person name="Sharp S."/>
            <person name="Skelton J."/>
            <person name="Simmonds M.N."/>
            <person name="Squares R."/>
            <person name="Squares S."/>
            <person name="Stevens K."/>
            <person name="Taylor K."/>
            <person name="Taylor R.G."/>
            <person name="Tivey A."/>
            <person name="Walsh S.V."/>
            <person name="Warren T."/>
            <person name="Whitehead S."/>
            <person name="Woodward J.R."/>
            <person name="Volckaert G."/>
            <person name="Aert R."/>
            <person name="Robben J."/>
            <person name="Grymonprez B."/>
            <person name="Weltjens I."/>
            <person name="Vanstreels E."/>
            <person name="Rieger M."/>
            <person name="Schaefer M."/>
            <person name="Mueller-Auer S."/>
            <person name="Gabel C."/>
            <person name="Fuchs M."/>
            <person name="Duesterhoeft A."/>
            <person name="Fritzc C."/>
            <person name="Holzer E."/>
            <person name="Moestl D."/>
            <person name="Hilbert H."/>
            <person name="Borzym K."/>
            <person name="Langer I."/>
            <person name="Beck A."/>
            <person name="Lehrach H."/>
            <person name="Reinhardt R."/>
            <person name="Pohl T.M."/>
            <person name="Eger P."/>
            <person name="Zimmermann W."/>
            <person name="Wedler H."/>
            <person name="Wambutt R."/>
            <person name="Purnelle B."/>
            <person name="Goffeau A."/>
            <person name="Cadieu E."/>
            <person name="Dreano S."/>
            <person name="Gloux S."/>
            <person name="Lelaure V."/>
            <person name="Mottier S."/>
            <person name="Galibert F."/>
            <person name="Aves S.J."/>
            <person name="Xiang Z."/>
            <person name="Hunt C."/>
            <person name="Moore K."/>
            <person name="Hurst S.M."/>
            <person name="Lucas M."/>
            <person name="Rochet M."/>
            <person name="Gaillardin C."/>
            <person name="Tallada V.A."/>
            <person name="Garzon A."/>
            <person name="Thode G."/>
            <person name="Daga R.R."/>
            <person name="Cruzado L."/>
            <person name="Jimenez J."/>
            <person name="Sanchez M."/>
            <person name="del Rey F."/>
            <person name="Benito J."/>
            <person name="Dominguez A."/>
            <person name="Revuelta J.L."/>
            <person name="Moreno S."/>
            <person name="Armstrong J."/>
            <person name="Forsburg S.L."/>
            <person name="Cerutti L."/>
            <person name="Lowe T."/>
            <person name="McCombie W.R."/>
            <person name="Paulsen I."/>
            <person name="Potashkin J."/>
            <person name="Shpakovski G.V."/>
            <person name="Ussery D."/>
            <person name="Barrell B.G."/>
            <person name="Nurse P."/>
        </authorList>
    </citation>
    <scope>NUCLEOTIDE SEQUENCE [LARGE SCALE GENOMIC DNA]</scope>
    <source>
        <strain>972 / ATCC 24843</strain>
    </source>
</reference>
<reference key="2">
    <citation type="journal article" date="1998" name="Nucleic Acids Res.">
        <title>The fission yeast chromo domain encoding gene chp1(+) is required for chromosome segregation and shows a genetic interaction with alpha-tubulin.</title>
        <authorList>
            <person name="Doe C.L."/>
            <person name="Wang G."/>
            <person name="Chow C.-M."/>
            <person name="Fricker M.D."/>
            <person name="Singh P.B."/>
            <person name="Mellor E.J."/>
        </authorList>
    </citation>
    <scope>FUNCTION</scope>
    <scope>SUBCELLULAR LOCATION</scope>
</reference>
<reference key="3">
    <citation type="journal article" date="2000" name="Genetics">
        <title>Four chromo-domain proteins of Schizosaccharomyces pombe differentially repress transcription at various chromosomal locations.</title>
        <authorList>
            <person name="Thon G."/>
            <person name="Verhein-Hansen J."/>
        </authorList>
    </citation>
    <scope>FUNCTION</scope>
</reference>
<reference key="4">
    <citation type="journal article" date="2004" name="Cell">
        <title>Two RNAi complexes, RITS and RDRC, physically interact and localize to noncoding centromeric RNAs.</title>
        <authorList>
            <person name="Motamedi M.R."/>
            <person name="Verdel A."/>
            <person name="Colmenares S.U."/>
            <person name="Gerber S.A."/>
            <person name="Gygi S.P."/>
            <person name="Moazed D."/>
        </authorList>
    </citation>
    <scope>FUNCTION</scope>
    <scope>COMPOSITION OF THE RDRC AND RITS COMPLEXES</scope>
    <scope>SUBCELLULAR LOCATION</scope>
    <scope>IDENTIFICATION BY MASS SPECTROMETRY</scope>
</reference>
<reference key="5">
    <citation type="journal article" date="2004" name="Science">
        <title>RNAi-mediated targeting of heterochromatin by the RITS complex.</title>
        <authorList>
            <person name="Verdel A."/>
            <person name="Jia S."/>
            <person name="Gerber S."/>
            <person name="Sugiyama T."/>
            <person name="Gygi S.P."/>
            <person name="Grewal S.I.S."/>
            <person name="Moazed D."/>
        </authorList>
    </citation>
    <scope>FUNCTION</scope>
    <scope>COMPOSITION OF THE RITS COMPLEX</scope>
    <scope>INTERACTION WITH TAS3</scope>
</reference>
<reference key="6">
    <citation type="journal article" date="2006" name="Nat. Biotechnol.">
        <title>ORFeome cloning and global analysis of protein localization in the fission yeast Schizosaccharomyces pombe.</title>
        <authorList>
            <person name="Matsuyama A."/>
            <person name="Arai R."/>
            <person name="Yashiroda Y."/>
            <person name="Shirai A."/>
            <person name="Kamata A."/>
            <person name="Sekido S."/>
            <person name="Kobayashi Y."/>
            <person name="Hashimoto A."/>
            <person name="Hamamoto M."/>
            <person name="Hiraoka Y."/>
            <person name="Horinouchi S."/>
            <person name="Yoshida M."/>
        </authorList>
    </citation>
    <scope>SUBCELLULAR LOCATION [LARGE SCALE ANALYSIS]</scope>
</reference>
<reference key="7">
    <citation type="journal article" date="2021" name="Genetics">
        <title>Dri1 mediates heterochromatin assembly via RNAi and histone deacetylation.</title>
        <authorList>
            <person name="Ban H."/>
            <person name="Sun W."/>
            <person name="Chen Y.H."/>
            <person name="Chen Y."/>
            <person name="Li F."/>
        </authorList>
    </citation>
    <scope>INTERACTION WITH DRI1</scope>
</reference>
<feature type="chain" id="PRO_0000080238" description="Chromo domain-containing protein 1">
    <location>
        <begin position="1"/>
        <end position="960"/>
    </location>
</feature>
<feature type="domain" description="Chromo" evidence="1">
    <location>
        <begin position="22"/>
        <end position="74"/>
    </location>
</feature>
<feature type="helix" evidence="9">
    <location>
        <begin position="18"/>
        <end position="20"/>
    </location>
</feature>
<feature type="strand" evidence="10">
    <location>
        <begin position="21"/>
        <end position="32"/>
    </location>
</feature>
<feature type="strand" evidence="9">
    <location>
        <begin position="34"/>
        <end position="36"/>
    </location>
</feature>
<feature type="strand" evidence="10">
    <location>
        <begin position="38"/>
        <end position="44"/>
    </location>
</feature>
<feature type="helix" evidence="10">
    <location>
        <begin position="49"/>
        <end position="51"/>
    </location>
</feature>
<feature type="strand" evidence="10">
    <location>
        <begin position="53"/>
        <end position="56"/>
    </location>
</feature>
<feature type="helix" evidence="10">
    <location>
        <begin position="57"/>
        <end position="60"/>
    </location>
</feature>
<feature type="turn" evidence="9">
    <location>
        <begin position="61"/>
        <end position="63"/>
    </location>
</feature>
<feature type="helix" evidence="10">
    <location>
        <begin position="64"/>
        <end position="72"/>
    </location>
</feature>
<feature type="strand" evidence="11">
    <location>
        <begin position="519"/>
        <end position="526"/>
    </location>
</feature>
<feature type="turn" evidence="11">
    <location>
        <begin position="527"/>
        <end position="530"/>
    </location>
</feature>
<feature type="strand" evidence="11">
    <location>
        <begin position="531"/>
        <end position="539"/>
    </location>
</feature>
<feature type="helix" evidence="11">
    <location>
        <begin position="541"/>
        <end position="544"/>
    </location>
</feature>
<feature type="helix" evidence="11">
    <location>
        <begin position="550"/>
        <end position="558"/>
    </location>
</feature>
<feature type="strand" evidence="11">
    <location>
        <begin position="561"/>
        <end position="564"/>
    </location>
</feature>
<feature type="strand" evidence="11">
    <location>
        <begin position="566"/>
        <end position="569"/>
    </location>
</feature>
<feature type="helix" evidence="11">
    <location>
        <begin position="570"/>
        <end position="576"/>
    </location>
</feature>
<feature type="strand" evidence="11">
    <location>
        <begin position="582"/>
        <end position="587"/>
    </location>
</feature>
<feature type="strand" evidence="11">
    <location>
        <begin position="589"/>
        <end position="595"/>
    </location>
</feature>
<feature type="helix" evidence="11">
    <location>
        <begin position="596"/>
        <end position="606"/>
    </location>
</feature>
<feature type="strand" evidence="11">
    <location>
        <begin position="608"/>
        <end position="613"/>
    </location>
</feature>
<feature type="strand" evidence="11">
    <location>
        <begin position="618"/>
        <end position="623"/>
    </location>
</feature>
<feature type="helix" evidence="11">
    <location>
        <begin position="627"/>
        <end position="632"/>
    </location>
</feature>
<feature type="strand" evidence="11">
    <location>
        <begin position="641"/>
        <end position="648"/>
    </location>
</feature>
<feature type="helix" evidence="11">
    <location>
        <begin position="653"/>
        <end position="660"/>
    </location>
</feature>
<feature type="helix" evidence="11">
    <location>
        <begin position="675"/>
        <end position="682"/>
    </location>
</feature>
<feature type="turn" evidence="11">
    <location>
        <begin position="687"/>
        <end position="691"/>
    </location>
</feature>
<feature type="helix" evidence="11">
    <location>
        <begin position="692"/>
        <end position="694"/>
    </location>
</feature>
<feature type="strand" evidence="11">
    <location>
        <begin position="696"/>
        <end position="701"/>
    </location>
</feature>
<feature type="helix" evidence="11">
    <location>
        <begin position="707"/>
        <end position="718"/>
    </location>
</feature>
<feature type="strand" evidence="11">
    <location>
        <begin position="723"/>
        <end position="727"/>
    </location>
</feature>
<feature type="helix" evidence="11">
    <location>
        <begin position="731"/>
        <end position="734"/>
    </location>
</feature>
<feature type="strand" evidence="11">
    <location>
        <begin position="736"/>
        <end position="744"/>
    </location>
</feature>
<feature type="helix" evidence="11">
    <location>
        <begin position="745"/>
        <end position="747"/>
    </location>
</feature>
<feature type="turn" evidence="11">
    <location>
        <begin position="748"/>
        <end position="750"/>
    </location>
</feature>
<feature type="helix" evidence="11">
    <location>
        <begin position="751"/>
        <end position="753"/>
    </location>
</feature>
<feature type="helix" evidence="11">
    <location>
        <begin position="757"/>
        <end position="762"/>
    </location>
</feature>
<feature type="strand" evidence="11">
    <location>
        <begin position="766"/>
        <end position="771"/>
    </location>
</feature>
<feature type="strand" evidence="11">
    <location>
        <begin position="804"/>
        <end position="808"/>
    </location>
</feature>
<feature type="strand" evidence="11">
    <location>
        <begin position="812"/>
        <end position="816"/>
    </location>
</feature>
<feature type="helix" evidence="11">
    <location>
        <begin position="818"/>
        <end position="823"/>
    </location>
</feature>
<feature type="helix" evidence="11">
    <location>
        <begin position="827"/>
        <end position="837"/>
    </location>
</feature>
<feature type="turn" evidence="11">
    <location>
        <begin position="838"/>
        <end position="841"/>
    </location>
</feature>
<feature type="strand" evidence="11">
    <location>
        <begin position="842"/>
        <end position="846"/>
    </location>
</feature>
<feature type="helix" evidence="11">
    <location>
        <begin position="850"/>
        <end position="861"/>
    </location>
</feature>
<feature type="helix" evidence="11">
    <location>
        <begin position="867"/>
        <end position="882"/>
    </location>
</feature>
<feature type="strand" evidence="11">
    <location>
        <begin position="889"/>
        <end position="891"/>
    </location>
</feature>
<feature type="helix" evidence="11">
    <location>
        <begin position="894"/>
        <end position="896"/>
    </location>
</feature>
<feature type="helix" evidence="11">
    <location>
        <begin position="903"/>
        <end position="918"/>
    </location>
</feature>
<feature type="turn" evidence="11">
    <location>
        <begin position="919"/>
        <end position="921"/>
    </location>
</feature>
<feature type="strand" evidence="11">
    <location>
        <begin position="923"/>
        <end position="928"/>
    </location>
</feature>
<feature type="helix" evidence="11">
    <location>
        <begin position="932"/>
        <end position="934"/>
    </location>
</feature>
<feature type="strand" evidence="11">
    <location>
        <begin position="941"/>
        <end position="944"/>
    </location>
</feature>
<feature type="helix" evidence="11">
    <location>
        <begin position="946"/>
        <end position="952"/>
    </location>
</feature>
<name>CHP1_SCHPO</name>
<accession>Q10103</accession>
<protein>
    <recommendedName>
        <fullName evidence="7">Chromo domain-containing protein 1</fullName>
    </recommendedName>
</protein>